<name>THIE_ANADE</name>
<proteinExistence type="inferred from homology"/>
<evidence type="ECO:0000255" key="1">
    <source>
        <dbReference type="HAMAP-Rule" id="MF_00097"/>
    </source>
</evidence>
<protein>
    <recommendedName>
        <fullName evidence="1">Thiamine-phosphate synthase</fullName>
        <shortName evidence="1">TP synthase</shortName>
        <shortName evidence="1">TPS</shortName>
        <ecNumber evidence="1">2.5.1.3</ecNumber>
    </recommendedName>
    <alternativeName>
        <fullName evidence="1">Thiamine-phosphate pyrophosphorylase</fullName>
        <shortName evidence="1">TMP pyrophosphorylase</shortName>
        <shortName evidence="1">TMP-PPase</shortName>
    </alternativeName>
</protein>
<feature type="chain" id="PRO_0000336372" description="Thiamine-phosphate synthase">
    <location>
        <begin position="1"/>
        <end position="222"/>
    </location>
</feature>
<feature type="binding site" evidence="1">
    <location>
        <begin position="44"/>
        <end position="48"/>
    </location>
    <ligand>
        <name>4-amino-2-methyl-5-(diphosphooxymethyl)pyrimidine</name>
        <dbReference type="ChEBI" id="CHEBI:57841"/>
    </ligand>
</feature>
<feature type="binding site" evidence="1">
    <location>
        <position position="75"/>
    </location>
    <ligand>
        <name>4-amino-2-methyl-5-(diphosphooxymethyl)pyrimidine</name>
        <dbReference type="ChEBI" id="CHEBI:57841"/>
    </ligand>
</feature>
<feature type="binding site" evidence="1">
    <location>
        <position position="76"/>
    </location>
    <ligand>
        <name>Mg(2+)</name>
        <dbReference type="ChEBI" id="CHEBI:18420"/>
    </ligand>
</feature>
<feature type="binding site" evidence="1">
    <location>
        <position position="95"/>
    </location>
    <ligand>
        <name>Mg(2+)</name>
        <dbReference type="ChEBI" id="CHEBI:18420"/>
    </ligand>
</feature>
<feature type="binding site" evidence="1">
    <location>
        <position position="114"/>
    </location>
    <ligand>
        <name>4-amino-2-methyl-5-(diphosphooxymethyl)pyrimidine</name>
        <dbReference type="ChEBI" id="CHEBI:57841"/>
    </ligand>
</feature>
<feature type="binding site" evidence="1">
    <location>
        <begin position="140"/>
        <end position="142"/>
    </location>
    <ligand>
        <name>2-[(2R,5Z)-2-carboxy-4-methylthiazol-5(2H)-ylidene]ethyl phosphate</name>
        <dbReference type="ChEBI" id="CHEBI:62899"/>
    </ligand>
</feature>
<feature type="binding site" evidence="1">
    <location>
        <position position="143"/>
    </location>
    <ligand>
        <name>4-amino-2-methyl-5-(diphosphooxymethyl)pyrimidine</name>
        <dbReference type="ChEBI" id="CHEBI:57841"/>
    </ligand>
</feature>
<feature type="binding site" evidence="1">
    <location>
        <position position="171"/>
    </location>
    <ligand>
        <name>2-[(2R,5Z)-2-carboxy-4-methylthiazol-5(2H)-ylidene]ethyl phosphate</name>
        <dbReference type="ChEBI" id="CHEBI:62899"/>
    </ligand>
</feature>
<reference key="1">
    <citation type="submission" date="2006-01" db="EMBL/GenBank/DDBJ databases">
        <title>Complete sequence of Anaeromyxobacter dehalogenans 2CP-C.</title>
        <authorList>
            <person name="Copeland A."/>
            <person name="Lucas S."/>
            <person name="Lapidus A."/>
            <person name="Barry K."/>
            <person name="Detter J.C."/>
            <person name="Glavina T."/>
            <person name="Hammon N."/>
            <person name="Israni S."/>
            <person name="Pitluck S."/>
            <person name="Brettin T."/>
            <person name="Bruce D."/>
            <person name="Han C."/>
            <person name="Tapia R."/>
            <person name="Gilna P."/>
            <person name="Kiss H."/>
            <person name="Schmutz J."/>
            <person name="Larimer F."/>
            <person name="Land M."/>
            <person name="Kyrpides N."/>
            <person name="Anderson I."/>
            <person name="Sanford R.A."/>
            <person name="Ritalahti K.M."/>
            <person name="Thomas H.S."/>
            <person name="Kirby J.R."/>
            <person name="Zhulin I.B."/>
            <person name="Loeffler F.E."/>
            <person name="Richardson P."/>
        </authorList>
    </citation>
    <scope>NUCLEOTIDE SEQUENCE [LARGE SCALE GENOMIC DNA]</scope>
    <source>
        <strain>2CP-C</strain>
    </source>
</reference>
<dbReference type="EC" id="2.5.1.3" evidence="1"/>
<dbReference type="EMBL" id="CP000251">
    <property type="protein sequence ID" value="ABC79853.1"/>
    <property type="molecule type" value="Genomic_DNA"/>
</dbReference>
<dbReference type="RefSeq" id="WP_011419136.1">
    <property type="nucleotide sequence ID" value="NC_007760.1"/>
</dbReference>
<dbReference type="SMR" id="Q2IM25"/>
<dbReference type="STRING" id="290397.Adeh_0075"/>
<dbReference type="KEGG" id="ade:Adeh_0075"/>
<dbReference type="eggNOG" id="COG0352">
    <property type="taxonomic scope" value="Bacteria"/>
</dbReference>
<dbReference type="HOGENOM" id="CLU_018272_3_4_7"/>
<dbReference type="OrthoDB" id="9810880at2"/>
<dbReference type="UniPathway" id="UPA00060">
    <property type="reaction ID" value="UER00141"/>
</dbReference>
<dbReference type="Proteomes" id="UP000001935">
    <property type="component" value="Chromosome"/>
</dbReference>
<dbReference type="GO" id="GO:0005737">
    <property type="term" value="C:cytoplasm"/>
    <property type="evidence" value="ECO:0007669"/>
    <property type="project" value="TreeGrafter"/>
</dbReference>
<dbReference type="GO" id="GO:0000287">
    <property type="term" value="F:magnesium ion binding"/>
    <property type="evidence" value="ECO:0007669"/>
    <property type="project" value="UniProtKB-UniRule"/>
</dbReference>
<dbReference type="GO" id="GO:0004789">
    <property type="term" value="F:thiamine-phosphate diphosphorylase activity"/>
    <property type="evidence" value="ECO:0007669"/>
    <property type="project" value="UniProtKB-UniRule"/>
</dbReference>
<dbReference type="GO" id="GO:0009228">
    <property type="term" value="P:thiamine biosynthetic process"/>
    <property type="evidence" value="ECO:0007669"/>
    <property type="project" value="UniProtKB-KW"/>
</dbReference>
<dbReference type="GO" id="GO:0009229">
    <property type="term" value="P:thiamine diphosphate biosynthetic process"/>
    <property type="evidence" value="ECO:0007669"/>
    <property type="project" value="UniProtKB-UniRule"/>
</dbReference>
<dbReference type="CDD" id="cd00564">
    <property type="entry name" value="TMP_TenI"/>
    <property type="match status" value="1"/>
</dbReference>
<dbReference type="Gene3D" id="3.20.20.70">
    <property type="entry name" value="Aldolase class I"/>
    <property type="match status" value="1"/>
</dbReference>
<dbReference type="HAMAP" id="MF_00097">
    <property type="entry name" value="TMP_synthase"/>
    <property type="match status" value="1"/>
</dbReference>
<dbReference type="InterPro" id="IPR013785">
    <property type="entry name" value="Aldolase_TIM"/>
</dbReference>
<dbReference type="InterPro" id="IPR036206">
    <property type="entry name" value="ThiamineP_synth_sf"/>
</dbReference>
<dbReference type="InterPro" id="IPR022998">
    <property type="entry name" value="ThiamineP_synth_TenI"/>
</dbReference>
<dbReference type="InterPro" id="IPR034291">
    <property type="entry name" value="TMP_synthase"/>
</dbReference>
<dbReference type="NCBIfam" id="TIGR00693">
    <property type="entry name" value="thiE"/>
    <property type="match status" value="1"/>
</dbReference>
<dbReference type="PANTHER" id="PTHR20857">
    <property type="entry name" value="THIAMINE-PHOSPHATE PYROPHOSPHORYLASE"/>
    <property type="match status" value="1"/>
</dbReference>
<dbReference type="PANTHER" id="PTHR20857:SF15">
    <property type="entry name" value="THIAMINE-PHOSPHATE SYNTHASE"/>
    <property type="match status" value="1"/>
</dbReference>
<dbReference type="Pfam" id="PF02581">
    <property type="entry name" value="TMP-TENI"/>
    <property type="match status" value="1"/>
</dbReference>
<dbReference type="SUPFAM" id="SSF51391">
    <property type="entry name" value="Thiamin phosphate synthase"/>
    <property type="match status" value="1"/>
</dbReference>
<accession>Q2IM25</accession>
<organism>
    <name type="scientific">Anaeromyxobacter dehalogenans (strain 2CP-C)</name>
    <dbReference type="NCBI Taxonomy" id="290397"/>
    <lineage>
        <taxon>Bacteria</taxon>
        <taxon>Pseudomonadati</taxon>
        <taxon>Myxococcota</taxon>
        <taxon>Myxococcia</taxon>
        <taxon>Myxococcales</taxon>
        <taxon>Cystobacterineae</taxon>
        <taxon>Anaeromyxobacteraceae</taxon>
        <taxon>Anaeromyxobacter</taxon>
    </lineage>
</organism>
<gene>
    <name evidence="1" type="primary">thiE</name>
    <name type="ordered locus">Adeh_0075</name>
</gene>
<comment type="function">
    <text evidence="1">Condenses 4-methyl-5-(beta-hydroxyethyl)thiazole monophosphate (THZ-P) and 2-methyl-4-amino-5-hydroxymethyl pyrimidine pyrophosphate (HMP-PP) to form thiamine monophosphate (TMP).</text>
</comment>
<comment type="catalytic activity">
    <reaction evidence="1">
        <text>2-[(2R,5Z)-2-carboxy-4-methylthiazol-5(2H)-ylidene]ethyl phosphate + 4-amino-2-methyl-5-(diphosphooxymethyl)pyrimidine + 2 H(+) = thiamine phosphate + CO2 + diphosphate</text>
        <dbReference type="Rhea" id="RHEA:47844"/>
        <dbReference type="ChEBI" id="CHEBI:15378"/>
        <dbReference type="ChEBI" id="CHEBI:16526"/>
        <dbReference type="ChEBI" id="CHEBI:33019"/>
        <dbReference type="ChEBI" id="CHEBI:37575"/>
        <dbReference type="ChEBI" id="CHEBI:57841"/>
        <dbReference type="ChEBI" id="CHEBI:62899"/>
        <dbReference type="EC" id="2.5.1.3"/>
    </reaction>
</comment>
<comment type="catalytic activity">
    <reaction evidence="1">
        <text>2-(2-carboxy-4-methylthiazol-5-yl)ethyl phosphate + 4-amino-2-methyl-5-(diphosphooxymethyl)pyrimidine + 2 H(+) = thiamine phosphate + CO2 + diphosphate</text>
        <dbReference type="Rhea" id="RHEA:47848"/>
        <dbReference type="ChEBI" id="CHEBI:15378"/>
        <dbReference type="ChEBI" id="CHEBI:16526"/>
        <dbReference type="ChEBI" id="CHEBI:33019"/>
        <dbReference type="ChEBI" id="CHEBI:37575"/>
        <dbReference type="ChEBI" id="CHEBI:57841"/>
        <dbReference type="ChEBI" id="CHEBI:62890"/>
        <dbReference type="EC" id="2.5.1.3"/>
    </reaction>
</comment>
<comment type="catalytic activity">
    <reaction evidence="1">
        <text>4-methyl-5-(2-phosphooxyethyl)-thiazole + 4-amino-2-methyl-5-(diphosphooxymethyl)pyrimidine + H(+) = thiamine phosphate + diphosphate</text>
        <dbReference type="Rhea" id="RHEA:22328"/>
        <dbReference type="ChEBI" id="CHEBI:15378"/>
        <dbReference type="ChEBI" id="CHEBI:33019"/>
        <dbReference type="ChEBI" id="CHEBI:37575"/>
        <dbReference type="ChEBI" id="CHEBI:57841"/>
        <dbReference type="ChEBI" id="CHEBI:58296"/>
        <dbReference type="EC" id="2.5.1.3"/>
    </reaction>
</comment>
<comment type="cofactor">
    <cofactor evidence="1">
        <name>Mg(2+)</name>
        <dbReference type="ChEBI" id="CHEBI:18420"/>
    </cofactor>
    <text evidence="1">Binds 1 Mg(2+) ion per subunit.</text>
</comment>
<comment type="pathway">
    <text evidence="1">Cofactor biosynthesis; thiamine diphosphate biosynthesis; thiamine phosphate from 4-amino-2-methyl-5-diphosphomethylpyrimidine and 4-methyl-5-(2-phosphoethyl)-thiazole: step 1/1.</text>
</comment>
<comment type="similarity">
    <text evidence="1">Belongs to the thiamine-phosphate synthase family.</text>
</comment>
<sequence>MPVSEASVSAGRRARLGGLYVIVGGADPVAQARAAIGGGARAIQVRMKDAPAGAVLEATRRILALATGRALVLVNDRADLALLAGADGVHLGDDDLPVPEARRLLGPDLLVGRTTRTLEEARAALAEGADHVGYGPIFASRSKALPVPPRGLAALAEVARALPAPVVAIGGIGLDDVAAVARAGAACAAVIEAVLGAADPEAAAARMQAAFEAGRAARGATP</sequence>
<keyword id="KW-0460">Magnesium</keyword>
<keyword id="KW-0479">Metal-binding</keyword>
<keyword id="KW-1185">Reference proteome</keyword>
<keyword id="KW-0784">Thiamine biosynthesis</keyword>
<keyword id="KW-0808">Transferase</keyword>